<proteinExistence type="inferred from homology"/>
<dbReference type="EC" id="2.5.1.75" evidence="1"/>
<dbReference type="EMBL" id="CP000948">
    <property type="protein sequence ID" value="ACB05159.1"/>
    <property type="molecule type" value="Genomic_DNA"/>
</dbReference>
<dbReference type="RefSeq" id="WP_001280345.1">
    <property type="nucleotide sequence ID" value="NC_010473.1"/>
</dbReference>
<dbReference type="SMR" id="B1XDS2"/>
<dbReference type="GeneID" id="93777650"/>
<dbReference type="KEGG" id="ecd:ECDH10B_4366"/>
<dbReference type="HOGENOM" id="CLU_032616_0_0_6"/>
<dbReference type="GO" id="GO:0005524">
    <property type="term" value="F:ATP binding"/>
    <property type="evidence" value="ECO:0007669"/>
    <property type="project" value="UniProtKB-UniRule"/>
</dbReference>
<dbReference type="GO" id="GO:0052381">
    <property type="term" value="F:tRNA dimethylallyltransferase activity"/>
    <property type="evidence" value="ECO:0007669"/>
    <property type="project" value="UniProtKB-UniRule"/>
</dbReference>
<dbReference type="GO" id="GO:0006400">
    <property type="term" value="P:tRNA modification"/>
    <property type="evidence" value="ECO:0007669"/>
    <property type="project" value="TreeGrafter"/>
</dbReference>
<dbReference type="FunFam" id="1.10.20.140:FF:000001">
    <property type="entry name" value="tRNA dimethylallyltransferase"/>
    <property type="match status" value="1"/>
</dbReference>
<dbReference type="FunFam" id="1.10.287.890:FF:000001">
    <property type="entry name" value="tRNA dimethylallyltransferase"/>
    <property type="match status" value="1"/>
</dbReference>
<dbReference type="Gene3D" id="1.10.20.140">
    <property type="match status" value="1"/>
</dbReference>
<dbReference type="Gene3D" id="1.10.287.890">
    <property type="entry name" value="Crystal structure of tRNA isopentenylpyrophosphate transferase (bh2366) domain"/>
    <property type="match status" value="1"/>
</dbReference>
<dbReference type="Gene3D" id="3.40.50.300">
    <property type="entry name" value="P-loop containing nucleotide triphosphate hydrolases"/>
    <property type="match status" value="1"/>
</dbReference>
<dbReference type="HAMAP" id="MF_00185">
    <property type="entry name" value="IPP_trans"/>
    <property type="match status" value="1"/>
</dbReference>
<dbReference type="InterPro" id="IPR039657">
    <property type="entry name" value="Dimethylallyltransferase"/>
</dbReference>
<dbReference type="InterPro" id="IPR018022">
    <property type="entry name" value="IPT"/>
</dbReference>
<dbReference type="InterPro" id="IPR027417">
    <property type="entry name" value="P-loop_NTPase"/>
</dbReference>
<dbReference type="NCBIfam" id="TIGR00174">
    <property type="entry name" value="miaA"/>
    <property type="match status" value="1"/>
</dbReference>
<dbReference type="PANTHER" id="PTHR11088">
    <property type="entry name" value="TRNA DIMETHYLALLYLTRANSFERASE"/>
    <property type="match status" value="1"/>
</dbReference>
<dbReference type="PANTHER" id="PTHR11088:SF60">
    <property type="entry name" value="TRNA DIMETHYLALLYLTRANSFERASE"/>
    <property type="match status" value="1"/>
</dbReference>
<dbReference type="Pfam" id="PF01715">
    <property type="entry name" value="IPPT"/>
    <property type="match status" value="1"/>
</dbReference>
<dbReference type="SUPFAM" id="SSF52540">
    <property type="entry name" value="P-loop containing nucleoside triphosphate hydrolases"/>
    <property type="match status" value="1"/>
</dbReference>
<name>MIAA_ECODH</name>
<accession>B1XDS2</accession>
<keyword id="KW-0067">ATP-binding</keyword>
<keyword id="KW-0460">Magnesium</keyword>
<keyword id="KW-0547">Nucleotide-binding</keyword>
<keyword id="KW-0808">Transferase</keyword>
<keyword id="KW-0819">tRNA processing</keyword>
<evidence type="ECO:0000255" key="1">
    <source>
        <dbReference type="HAMAP-Rule" id="MF_00185"/>
    </source>
</evidence>
<sequence length="316" mass="35065">MSDISKASLPKAIFLMGPTASGKTALAIELRKILPVELISVDSALIYKGMDIGTAKPNAEELLAAPHRLLDIRDPSQAYSAADFRRDALAEMADITAAGRIPLLVGGTMLYFKALLEGLSPLPSADPEVRARIEQQAAEQGWESLHRQLQEVDPVAAARIHPNDPQRLSRALEVFFISGKTLTELTQTSGDALPYQVHQFAIAPASRELLHQRIEQRFHQMLASGFEAEVRALFARGDLHTDLPSIRCVGYRQMWSYLEGEISYDEMVYRGVCATRQLAKRQITWLRGWEGVHWLDSEKPEQARDEVLQVVGAIAG</sequence>
<reference key="1">
    <citation type="journal article" date="2008" name="J. Bacteriol.">
        <title>The complete genome sequence of Escherichia coli DH10B: insights into the biology of a laboratory workhorse.</title>
        <authorList>
            <person name="Durfee T."/>
            <person name="Nelson R."/>
            <person name="Baldwin S."/>
            <person name="Plunkett G. III"/>
            <person name="Burland V."/>
            <person name="Mau B."/>
            <person name="Petrosino J.F."/>
            <person name="Qin X."/>
            <person name="Muzny D.M."/>
            <person name="Ayele M."/>
            <person name="Gibbs R.A."/>
            <person name="Csorgo B."/>
            <person name="Posfai G."/>
            <person name="Weinstock G.M."/>
            <person name="Blattner F.R."/>
        </authorList>
    </citation>
    <scope>NUCLEOTIDE SEQUENCE [LARGE SCALE GENOMIC DNA]</scope>
    <source>
        <strain>K12 / DH10B</strain>
    </source>
</reference>
<feature type="chain" id="PRO_1000098662" description="tRNA dimethylallyltransferase">
    <location>
        <begin position="1"/>
        <end position="316"/>
    </location>
</feature>
<feature type="region of interest" description="Interaction with substrate tRNA" evidence="1">
    <location>
        <begin position="42"/>
        <end position="45"/>
    </location>
</feature>
<feature type="region of interest" description="Interaction with substrate tRNA" evidence="1">
    <location>
        <begin position="166"/>
        <end position="170"/>
    </location>
</feature>
<feature type="region of interest" description="Interaction with substrate tRNA" evidence="1">
    <location>
        <begin position="247"/>
        <end position="252"/>
    </location>
</feature>
<feature type="region of interest" description="Interaction with substrate tRNA" evidence="1">
    <location>
        <begin position="280"/>
        <end position="287"/>
    </location>
</feature>
<feature type="binding site" evidence="1">
    <location>
        <begin position="17"/>
        <end position="24"/>
    </location>
    <ligand>
        <name>ATP</name>
        <dbReference type="ChEBI" id="CHEBI:30616"/>
    </ligand>
</feature>
<feature type="binding site" evidence="1">
    <location>
        <begin position="19"/>
        <end position="24"/>
    </location>
    <ligand>
        <name>substrate</name>
    </ligand>
</feature>
<feature type="site" description="Interaction with substrate tRNA" evidence="1">
    <location>
        <position position="108"/>
    </location>
</feature>
<feature type="site" description="Interaction with substrate tRNA" evidence="1">
    <location>
        <position position="130"/>
    </location>
</feature>
<protein>
    <recommendedName>
        <fullName evidence="1">tRNA dimethylallyltransferase</fullName>
        <ecNumber evidence="1">2.5.1.75</ecNumber>
    </recommendedName>
    <alternativeName>
        <fullName evidence="1">Dimethylallyl diphosphate:tRNA dimethylallyltransferase</fullName>
        <shortName evidence="1">DMAPP:tRNA dimethylallyltransferase</shortName>
        <shortName evidence="1">DMATase</shortName>
    </alternativeName>
    <alternativeName>
        <fullName evidence="1">Isopentenyl-diphosphate:tRNA isopentenyltransferase</fullName>
        <shortName evidence="1">IPP transferase</shortName>
        <shortName evidence="1">IPPT</shortName>
        <shortName evidence="1">IPTase</shortName>
    </alternativeName>
</protein>
<gene>
    <name evidence="1" type="primary">miaA</name>
    <name type="ordered locus">ECDH10B_4366</name>
</gene>
<comment type="function">
    <text evidence="1">Catalyzes the transfer of a dimethylallyl group onto the adenine at position 37 in tRNAs that read codons beginning with uridine, leading to the formation of N6-(dimethylallyl)adenosine (i(6)A).</text>
</comment>
<comment type="catalytic activity">
    <reaction evidence="1">
        <text>adenosine(37) in tRNA + dimethylallyl diphosphate = N(6)-dimethylallyladenosine(37) in tRNA + diphosphate</text>
        <dbReference type="Rhea" id="RHEA:26482"/>
        <dbReference type="Rhea" id="RHEA-COMP:10162"/>
        <dbReference type="Rhea" id="RHEA-COMP:10375"/>
        <dbReference type="ChEBI" id="CHEBI:33019"/>
        <dbReference type="ChEBI" id="CHEBI:57623"/>
        <dbReference type="ChEBI" id="CHEBI:74411"/>
        <dbReference type="ChEBI" id="CHEBI:74415"/>
        <dbReference type="EC" id="2.5.1.75"/>
    </reaction>
</comment>
<comment type="cofactor">
    <cofactor evidence="1">
        <name>Mg(2+)</name>
        <dbReference type="ChEBI" id="CHEBI:18420"/>
    </cofactor>
</comment>
<comment type="subunit">
    <text evidence="1">Monomer.</text>
</comment>
<comment type="similarity">
    <text evidence="1">Belongs to the IPP transferase family.</text>
</comment>
<organism>
    <name type="scientific">Escherichia coli (strain K12 / DH10B)</name>
    <dbReference type="NCBI Taxonomy" id="316385"/>
    <lineage>
        <taxon>Bacteria</taxon>
        <taxon>Pseudomonadati</taxon>
        <taxon>Pseudomonadota</taxon>
        <taxon>Gammaproteobacteria</taxon>
        <taxon>Enterobacterales</taxon>
        <taxon>Enterobacteriaceae</taxon>
        <taxon>Escherichia</taxon>
    </lineage>
</organism>